<name>GAL1_SALTI</name>
<evidence type="ECO:0000255" key="1">
    <source>
        <dbReference type="HAMAP-Rule" id="MF_00246"/>
    </source>
</evidence>
<organism>
    <name type="scientific">Salmonella typhi</name>
    <dbReference type="NCBI Taxonomy" id="90370"/>
    <lineage>
        <taxon>Bacteria</taxon>
        <taxon>Pseudomonadati</taxon>
        <taxon>Pseudomonadota</taxon>
        <taxon>Gammaproteobacteria</taxon>
        <taxon>Enterobacterales</taxon>
        <taxon>Enterobacteriaceae</taxon>
        <taxon>Salmonella</taxon>
    </lineage>
</organism>
<sequence length="382" mass="41246">MNLKEKTRALFAEIFGYPATHTIQAPGRVNLIGEHTDYNDGFVLPCAIDYQTVISCAPRDDRTVRVIAADYDNQVDEFSLDAPIVTHDSQQWSNYVRGVVKHLQQRNNAFGGVDMVISGNVPQGAGLSSSASLEVAVGTVFQQLYHLPLDGAQIALNGQEAENQFVGCNCGIMDQLISALGKKDHALLIDCRTLGAKAVSMPKGVAVVIINSNFKRTLVGSEYNTRREQCETGARFFQQPALRDVSLEAFNAVASELDPVVAKRVRHVLSENARTVEAASALEKGDLQRMGQLMAESHASMRDDFEITVPQIDTLVDIVKATIGDQGGVRMTGGGFGGCVVALIPEDLVPAVQQAVAQQYEAKTGIKETFYVCKPSQGAGQC</sequence>
<accession>Q8Z8B0</accession>
<feature type="chain" id="PRO_0000184621" description="Galactokinase">
    <location>
        <begin position="1"/>
        <end position="382"/>
    </location>
</feature>
<feature type="active site" description="Proton acceptor" evidence="1">
    <location>
        <position position="174"/>
    </location>
</feature>
<feature type="binding site" evidence="1">
    <location>
        <begin position="34"/>
        <end position="37"/>
    </location>
    <ligand>
        <name>substrate</name>
    </ligand>
</feature>
<feature type="binding site" evidence="1">
    <location>
        <begin position="124"/>
        <end position="130"/>
    </location>
    <ligand>
        <name>ATP</name>
        <dbReference type="ChEBI" id="CHEBI:30616"/>
    </ligand>
</feature>
<feature type="binding site" evidence="1">
    <location>
        <position position="130"/>
    </location>
    <ligand>
        <name>Mg(2+)</name>
        <dbReference type="ChEBI" id="CHEBI:18420"/>
    </ligand>
</feature>
<feature type="binding site" evidence="1">
    <location>
        <position position="162"/>
    </location>
    <ligand>
        <name>Mg(2+)</name>
        <dbReference type="ChEBI" id="CHEBI:18420"/>
    </ligand>
</feature>
<feature type="binding site" evidence="1">
    <location>
        <position position="223"/>
    </location>
    <ligand>
        <name>substrate</name>
    </ligand>
</feature>
<feature type="site" description="Transition state stabilizer" evidence="1">
    <location>
        <position position="28"/>
    </location>
</feature>
<comment type="function">
    <text evidence="1">Catalyzes the transfer of the gamma-phosphate of ATP to D-galactose to form alpha-D-galactose-1-phosphate (Gal-1-P).</text>
</comment>
<comment type="catalytic activity">
    <reaction evidence="1">
        <text>alpha-D-galactose + ATP = alpha-D-galactose 1-phosphate + ADP + H(+)</text>
        <dbReference type="Rhea" id="RHEA:13553"/>
        <dbReference type="ChEBI" id="CHEBI:15378"/>
        <dbReference type="ChEBI" id="CHEBI:28061"/>
        <dbReference type="ChEBI" id="CHEBI:30616"/>
        <dbReference type="ChEBI" id="CHEBI:58336"/>
        <dbReference type="ChEBI" id="CHEBI:456216"/>
        <dbReference type="EC" id="2.7.1.6"/>
    </reaction>
</comment>
<comment type="pathway">
    <text evidence="1">Carbohydrate metabolism; galactose metabolism.</text>
</comment>
<comment type="subcellular location">
    <subcellularLocation>
        <location evidence="1">Cytoplasm</location>
    </subcellularLocation>
</comment>
<comment type="similarity">
    <text evidence="1">Belongs to the GHMP kinase family. GalK subfamily.</text>
</comment>
<keyword id="KW-0067">ATP-binding</keyword>
<keyword id="KW-0119">Carbohydrate metabolism</keyword>
<keyword id="KW-0963">Cytoplasm</keyword>
<keyword id="KW-0299">Galactose metabolism</keyword>
<keyword id="KW-0418">Kinase</keyword>
<keyword id="KW-0460">Magnesium</keyword>
<keyword id="KW-0479">Metal-binding</keyword>
<keyword id="KW-0547">Nucleotide-binding</keyword>
<keyword id="KW-0808">Transferase</keyword>
<reference key="1">
    <citation type="journal article" date="2001" name="Nature">
        <title>Complete genome sequence of a multiple drug resistant Salmonella enterica serovar Typhi CT18.</title>
        <authorList>
            <person name="Parkhill J."/>
            <person name="Dougan G."/>
            <person name="James K.D."/>
            <person name="Thomson N.R."/>
            <person name="Pickard D."/>
            <person name="Wain J."/>
            <person name="Churcher C.M."/>
            <person name="Mungall K.L."/>
            <person name="Bentley S.D."/>
            <person name="Holden M.T.G."/>
            <person name="Sebaihia M."/>
            <person name="Baker S."/>
            <person name="Basham D."/>
            <person name="Brooks K."/>
            <person name="Chillingworth T."/>
            <person name="Connerton P."/>
            <person name="Cronin A."/>
            <person name="Davis P."/>
            <person name="Davies R.M."/>
            <person name="Dowd L."/>
            <person name="White N."/>
            <person name="Farrar J."/>
            <person name="Feltwell T."/>
            <person name="Hamlin N."/>
            <person name="Haque A."/>
            <person name="Hien T.T."/>
            <person name="Holroyd S."/>
            <person name="Jagels K."/>
            <person name="Krogh A."/>
            <person name="Larsen T.S."/>
            <person name="Leather S."/>
            <person name="Moule S."/>
            <person name="O'Gaora P."/>
            <person name="Parry C."/>
            <person name="Quail M.A."/>
            <person name="Rutherford K.M."/>
            <person name="Simmonds M."/>
            <person name="Skelton J."/>
            <person name="Stevens K."/>
            <person name="Whitehead S."/>
            <person name="Barrell B.G."/>
        </authorList>
    </citation>
    <scope>NUCLEOTIDE SEQUENCE [LARGE SCALE GENOMIC DNA]</scope>
    <source>
        <strain>CT18</strain>
    </source>
</reference>
<reference key="2">
    <citation type="journal article" date="2003" name="J. Bacteriol.">
        <title>Comparative genomics of Salmonella enterica serovar Typhi strains Ty2 and CT18.</title>
        <authorList>
            <person name="Deng W."/>
            <person name="Liou S.-R."/>
            <person name="Plunkett G. III"/>
            <person name="Mayhew G.F."/>
            <person name="Rose D.J."/>
            <person name="Burland V."/>
            <person name="Kodoyianni V."/>
            <person name="Schwartz D.C."/>
            <person name="Blattner F.R."/>
        </authorList>
    </citation>
    <scope>NUCLEOTIDE SEQUENCE [LARGE SCALE GENOMIC DNA]</scope>
    <source>
        <strain>ATCC 700931 / Ty2</strain>
    </source>
</reference>
<gene>
    <name evidence="1" type="primary">galK</name>
    <name type="ordered locus">STY0807</name>
    <name type="ordered locus">t2113</name>
</gene>
<proteinExistence type="inferred from homology"/>
<dbReference type="EC" id="2.7.1.6" evidence="1"/>
<dbReference type="EMBL" id="AL513382">
    <property type="protein sequence ID" value="CAD05222.1"/>
    <property type="molecule type" value="Genomic_DNA"/>
</dbReference>
<dbReference type="EMBL" id="AE014613">
    <property type="protein sequence ID" value="AAO69730.1"/>
    <property type="molecule type" value="Genomic_DNA"/>
</dbReference>
<dbReference type="RefSeq" id="NP_455316.1">
    <property type="nucleotide sequence ID" value="NC_003198.1"/>
</dbReference>
<dbReference type="RefSeq" id="WP_001049364.1">
    <property type="nucleotide sequence ID" value="NZ_WSUR01000021.1"/>
</dbReference>
<dbReference type="SMR" id="Q8Z8B0"/>
<dbReference type="STRING" id="220341.gene:17584812"/>
<dbReference type="KEGG" id="stt:t2113"/>
<dbReference type="KEGG" id="sty:STY0807"/>
<dbReference type="PATRIC" id="fig|220341.7.peg.811"/>
<dbReference type="eggNOG" id="COG0153">
    <property type="taxonomic scope" value="Bacteria"/>
</dbReference>
<dbReference type="HOGENOM" id="CLU_017814_2_1_6"/>
<dbReference type="OMA" id="VMPCAIN"/>
<dbReference type="OrthoDB" id="250531at2"/>
<dbReference type="UniPathway" id="UPA00214"/>
<dbReference type="Proteomes" id="UP000000541">
    <property type="component" value="Chromosome"/>
</dbReference>
<dbReference type="Proteomes" id="UP000002670">
    <property type="component" value="Chromosome"/>
</dbReference>
<dbReference type="GO" id="GO:0005829">
    <property type="term" value="C:cytosol"/>
    <property type="evidence" value="ECO:0007669"/>
    <property type="project" value="TreeGrafter"/>
</dbReference>
<dbReference type="GO" id="GO:0005524">
    <property type="term" value="F:ATP binding"/>
    <property type="evidence" value="ECO:0007669"/>
    <property type="project" value="UniProtKB-UniRule"/>
</dbReference>
<dbReference type="GO" id="GO:0004335">
    <property type="term" value="F:galactokinase activity"/>
    <property type="evidence" value="ECO:0007669"/>
    <property type="project" value="UniProtKB-UniRule"/>
</dbReference>
<dbReference type="GO" id="GO:0000287">
    <property type="term" value="F:magnesium ion binding"/>
    <property type="evidence" value="ECO:0007669"/>
    <property type="project" value="UniProtKB-UniRule"/>
</dbReference>
<dbReference type="GO" id="GO:0006012">
    <property type="term" value="P:galactose metabolic process"/>
    <property type="evidence" value="ECO:0007669"/>
    <property type="project" value="UniProtKB-UniRule"/>
</dbReference>
<dbReference type="FunFam" id="3.30.230.10:FF:000017">
    <property type="entry name" value="Galactokinase"/>
    <property type="match status" value="1"/>
</dbReference>
<dbReference type="FunFam" id="3.30.70.890:FF:000001">
    <property type="entry name" value="Galactokinase"/>
    <property type="match status" value="1"/>
</dbReference>
<dbReference type="Gene3D" id="3.30.230.10">
    <property type="match status" value="1"/>
</dbReference>
<dbReference type="Gene3D" id="3.30.70.890">
    <property type="entry name" value="GHMP kinase, C-terminal domain"/>
    <property type="match status" value="1"/>
</dbReference>
<dbReference type="HAMAP" id="MF_00246">
    <property type="entry name" value="Galactokinase"/>
    <property type="match status" value="1"/>
</dbReference>
<dbReference type="InterPro" id="IPR000705">
    <property type="entry name" value="Galactokinase"/>
</dbReference>
<dbReference type="InterPro" id="IPR022963">
    <property type="entry name" value="Galactokinase_bac"/>
</dbReference>
<dbReference type="InterPro" id="IPR019741">
    <property type="entry name" value="Galactokinase_CS"/>
</dbReference>
<dbReference type="InterPro" id="IPR019539">
    <property type="entry name" value="GalKase_N"/>
</dbReference>
<dbReference type="InterPro" id="IPR013750">
    <property type="entry name" value="GHMP_kinase_C_dom"/>
</dbReference>
<dbReference type="InterPro" id="IPR036554">
    <property type="entry name" value="GHMP_kinase_C_sf"/>
</dbReference>
<dbReference type="InterPro" id="IPR006204">
    <property type="entry name" value="GHMP_kinase_N_dom"/>
</dbReference>
<dbReference type="InterPro" id="IPR006203">
    <property type="entry name" value="GHMP_knse_ATP-bd_CS"/>
</dbReference>
<dbReference type="InterPro" id="IPR006206">
    <property type="entry name" value="Mevalonate/galactokinase"/>
</dbReference>
<dbReference type="InterPro" id="IPR020568">
    <property type="entry name" value="Ribosomal_Su5_D2-typ_SF"/>
</dbReference>
<dbReference type="InterPro" id="IPR014721">
    <property type="entry name" value="Ribsml_uS5_D2-typ_fold_subgr"/>
</dbReference>
<dbReference type="NCBIfam" id="TIGR00131">
    <property type="entry name" value="gal_kin"/>
    <property type="match status" value="1"/>
</dbReference>
<dbReference type="NCBIfam" id="NF003472">
    <property type="entry name" value="PRK05101.1"/>
    <property type="match status" value="1"/>
</dbReference>
<dbReference type="PANTHER" id="PTHR10457:SF7">
    <property type="entry name" value="GALACTOKINASE-RELATED"/>
    <property type="match status" value="1"/>
</dbReference>
<dbReference type="PANTHER" id="PTHR10457">
    <property type="entry name" value="MEVALONATE KINASE/GALACTOKINASE"/>
    <property type="match status" value="1"/>
</dbReference>
<dbReference type="Pfam" id="PF10509">
    <property type="entry name" value="GalKase_gal_bdg"/>
    <property type="match status" value="1"/>
</dbReference>
<dbReference type="Pfam" id="PF08544">
    <property type="entry name" value="GHMP_kinases_C"/>
    <property type="match status" value="1"/>
</dbReference>
<dbReference type="Pfam" id="PF00288">
    <property type="entry name" value="GHMP_kinases_N"/>
    <property type="match status" value="1"/>
</dbReference>
<dbReference type="PIRSF" id="PIRSF000530">
    <property type="entry name" value="Galactokinase"/>
    <property type="match status" value="1"/>
</dbReference>
<dbReference type="PRINTS" id="PR00473">
    <property type="entry name" value="GALCTOKINASE"/>
</dbReference>
<dbReference type="PRINTS" id="PR00959">
    <property type="entry name" value="MEVGALKINASE"/>
</dbReference>
<dbReference type="SUPFAM" id="SSF55060">
    <property type="entry name" value="GHMP Kinase, C-terminal domain"/>
    <property type="match status" value="1"/>
</dbReference>
<dbReference type="SUPFAM" id="SSF54211">
    <property type="entry name" value="Ribosomal protein S5 domain 2-like"/>
    <property type="match status" value="1"/>
</dbReference>
<dbReference type="PROSITE" id="PS00106">
    <property type="entry name" value="GALACTOKINASE"/>
    <property type="match status" value="1"/>
</dbReference>
<dbReference type="PROSITE" id="PS00627">
    <property type="entry name" value="GHMP_KINASES_ATP"/>
    <property type="match status" value="1"/>
</dbReference>
<protein>
    <recommendedName>
        <fullName evidence="1">Galactokinase</fullName>
        <ecNumber evidence="1">2.7.1.6</ecNumber>
    </recommendedName>
    <alternativeName>
        <fullName evidence="1">Galactose kinase</fullName>
    </alternativeName>
</protein>